<comment type="function">
    <text evidence="2">Catalyzes the formation of feruloyldiketide-CoA by condensing feruloyl-CoA and malonyl-CoA in the curcuminoid biosynthesis. Has no activity with cinnamoyl-CoA.</text>
</comment>
<comment type="catalytic activity">
    <reaction evidence="2">
        <text>(E)-feruloyl-CoA + malonyl-CoA + H(+) = (E)-feruloylacetyl-CoA + CO2 + CoA</text>
        <dbReference type="Rhea" id="RHEA:22500"/>
        <dbReference type="ChEBI" id="CHEBI:15378"/>
        <dbReference type="ChEBI" id="CHEBI:16526"/>
        <dbReference type="ChEBI" id="CHEBI:57287"/>
        <dbReference type="ChEBI" id="CHEBI:57384"/>
        <dbReference type="ChEBI" id="CHEBI:87305"/>
        <dbReference type="ChEBI" id="CHEBI:142389"/>
        <dbReference type="EC" id="2.3.1.218"/>
    </reaction>
</comment>
<comment type="catalytic activity">
    <reaction evidence="2">
        <text>4-coumaroyl-CoA + malonyl-CoA + H(+) = (4-coumaroyl)acetyl-CoA + CO2 + CoA</text>
        <dbReference type="Rhea" id="RHEA:35115"/>
        <dbReference type="ChEBI" id="CHEBI:15378"/>
        <dbReference type="ChEBI" id="CHEBI:16526"/>
        <dbReference type="ChEBI" id="CHEBI:57287"/>
        <dbReference type="ChEBI" id="CHEBI:57355"/>
        <dbReference type="ChEBI" id="CHEBI:57384"/>
        <dbReference type="ChEBI" id="CHEBI:71211"/>
        <dbReference type="EC" id="2.3.1.218"/>
    </reaction>
</comment>
<comment type="biophysicochemical properties">
    <kinetics>
        <KM evidence="2">8.4 uM for malonyl-CoA</KM>
        <text>kcat is 0.67 min(-1) with malonyl-CoA.</text>
    </kinetics>
    <phDependence>
        <text evidence="2">Optimum pH is 6.5-7.5.</text>
    </phDependence>
    <temperatureDependence>
        <text evidence="2">Optimum temperature is 25-35 degrees Celsius.</text>
    </temperatureDependence>
</comment>
<comment type="pathway">
    <text evidence="2">Secondary metabolite biosynthesis; flavonoid biosynthesis.</text>
</comment>
<comment type="subunit">
    <text evidence="4">Homodimer.</text>
</comment>
<comment type="tissue specificity">
    <text evidence="2">Expressed in both the leaf and rhizome, with higher expression in the rhizome.</text>
</comment>
<comment type="similarity">
    <text evidence="3">Belongs to the thiolase-like superfamily. Chalcone/stilbene synthases family.</text>
</comment>
<organism>
    <name type="scientific">Curcuma longa</name>
    <name type="common">Turmeric</name>
    <name type="synonym">Curcuma domestica</name>
    <dbReference type="NCBI Taxonomy" id="136217"/>
    <lineage>
        <taxon>Eukaryota</taxon>
        <taxon>Viridiplantae</taxon>
        <taxon>Streptophyta</taxon>
        <taxon>Embryophyta</taxon>
        <taxon>Tracheophyta</taxon>
        <taxon>Spermatophyta</taxon>
        <taxon>Magnoliopsida</taxon>
        <taxon>Liliopsida</taxon>
        <taxon>Zingiberales</taxon>
        <taxon>Zingiberaceae</taxon>
        <taxon>Curcuma</taxon>
    </lineage>
</organism>
<dbReference type="EC" id="2.3.1.218"/>
<dbReference type="EMBL" id="AB495006">
    <property type="protein sequence ID" value="BAH56225.1"/>
    <property type="molecule type" value="mRNA"/>
</dbReference>
<dbReference type="SMR" id="C0SVZ5"/>
<dbReference type="KEGG" id="ag:BAH56225"/>
<dbReference type="BioCyc" id="MetaCyc:MONOMER-15408"/>
<dbReference type="BRENDA" id="2.3.1.218">
    <property type="organism ID" value="9125"/>
</dbReference>
<dbReference type="UniPathway" id="UPA00154"/>
<dbReference type="GO" id="GO:0016747">
    <property type="term" value="F:acyltransferase activity, transferring groups other than amino-acyl groups"/>
    <property type="evidence" value="ECO:0000314"/>
    <property type="project" value="UniProtKB"/>
</dbReference>
<dbReference type="GO" id="GO:0009813">
    <property type="term" value="P:flavonoid biosynthetic process"/>
    <property type="evidence" value="ECO:0000314"/>
    <property type="project" value="UniProtKB"/>
</dbReference>
<dbReference type="GO" id="GO:0030639">
    <property type="term" value="P:polyketide biosynthetic process"/>
    <property type="evidence" value="ECO:0007669"/>
    <property type="project" value="TreeGrafter"/>
</dbReference>
<dbReference type="CDD" id="cd00831">
    <property type="entry name" value="CHS_like"/>
    <property type="match status" value="1"/>
</dbReference>
<dbReference type="FunFam" id="3.40.47.10:FF:000014">
    <property type="entry name" value="Chalcone synthase 1"/>
    <property type="match status" value="1"/>
</dbReference>
<dbReference type="FunFam" id="3.40.47.10:FF:000025">
    <property type="entry name" value="Chalcone synthase 2"/>
    <property type="match status" value="1"/>
</dbReference>
<dbReference type="Gene3D" id="3.40.47.10">
    <property type="match status" value="2"/>
</dbReference>
<dbReference type="InterPro" id="IPR012328">
    <property type="entry name" value="Chalcone/stilbene_synt_C"/>
</dbReference>
<dbReference type="InterPro" id="IPR001099">
    <property type="entry name" value="Chalcone/stilbene_synt_N"/>
</dbReference>
<dbReference type="InterPro" id="IPR011141">
    <property type="entry name" value="Polyketide_synthase_type-III"/>
</dbReference>
<dbReference type="InterPro" id="IPR016039">
    <property type="entry name" value="Thiolase-like"/>
</dbReference>
<dbReference type="PANTHER" id="PTHR11877:SF105">
    <property type="entry name" value="CHALCONE SYNTHASE"/>
    <property type="match status" value="1"/>
</dbReference>
<dbReference type="PANTHER" id="PTHR11877">
    <property type="entry name" value="HYDROXYMETHYLGLUTARYL-COA SYNTHASE"/>
    <property type="match status" value="1"/>
</dbReference>
<dbReference type="Pfam" id="PF02797">
    <property type="entry name" value="Chal_sti_synt_C"/>
    <property type="match status" value="1"/>
</dbReference>
<dbReference type="Pfam" id="PF00195">
    <property type="entry name" value="Chal_sti_synt_N"/>
    <property type="match status" value="1"/>
</dbReference>
<dbReference type="PIRSF" id="PIRSF000451">
    <property type="entry name" value="PKS_III"/>
    <property type="match status" value="1"/>
</dbReference>
<dbReference type="SUPFAM" id="SSF53901">
    <property type="entry name" value="Thiolase-like"/>
    <property type="match status" value="2"/>
</dbReference>
<reference key="1">
    <citation type="journal article" date="2009" name="J. Biol. Chem.">
        <title>Curcuminoid biosynthesis by two type III polyketide synthases in the herb Curcuma longa.</title>
        <authorList>
            <person name="Katsuyama Y."/>
            <person name="Kita T."/>
            <person name="Funa N."/>
            <person name="Horinouchi S."/>
        </authorList>
    </citation>
    <scope>NUCLEOTIDE SEQUENCE [MRNA]</scope>
    <scope>FUNCTION</scope>
    <scope>CATALYTIC ACTIVITY</scope>
    <scope>BIOPHYSICOCHEMICAL PROPERTIES</scope>
    <scope>PATHWAY</scope>
    <scope>TISSUE SPECIFICITY</scope>
    <scope>SUBUNIT</scope>
</reference>
<sequence length="389" mass="42047">MEANGYRITHSADGPATILAIGTANPTNVVDQNAYPDFYFRVTNSEYLQELKAKFRRICEKAAIRKRHLYLTEEILRENPSLLAPMAPSFDARQAIVVEAVPKLAKEAAEKAIKEWGRPKSDITHLVFCSASGIDMPGSDLQLLKLLGLPPSVNRVMLYNVGCHAGGTALRVAKDLAENNRGARVLAVCSEVTVLSYRGPHPAHIESLFVQALFGDGAAALVVGSDPVDGVERPIFEIASASQVMLPESAEAVGGHLREIGLTFHLKSQLPSIIASNIEQSLTTACSPLGLSDWNQLFWAVHPGGRAILDQVEARLGLEKDRLAATRHVLSEYGNMQSATVLFILDEMRNRSAAEGHATTGEGLDWGVLLGFGPGLSIETVVLHSCRLN</sequence>
<keyword id="KW-0012">Acyltransferase</keyword>
<keyword id="KW-0284">Flavonoid biosynthesis</keyword>
<keyword id="KW-0808">Transferase</keyword>
<accession>C0SVZ5</accession>
<proteinExistence type="evidence at protein level"/>
<protein>
    <recommendedName>
        <fullName>Phenylpropanoylacetyl-CoA synthase</fullName>
        <ecNumber>2.3.1.218</ecNumber>
    </recommendedName>
    <alternativeName>
        <fullName>Diketide CoA synthase</fullName>
    </alternativeName>
</protein>
<feature type="chain" id="PRO_0000422570" description="Phenylpropanoylacetyl-CoA synthase">
    <location>
        <begin position="1"/>
        <end position="389"/>
    </location>
</feature>
<feature type="active site" evidence="1">
    <location>
        <position position="163"/>
    </location>
</feature>
<evidence type="ECO:0000250" key="1"/>
<evidence type="ECO:0000269" key="2">
    <source>
    </source>
</evidence>
<evidence type="ECO:0000305" key="3"/>
<evidence type="ECO:0000305" key="4">
    <source>
    </source>
</evidence>
<name>DCS_CURLO</name>
<gene>
    <name type="primary">DCS</name>
</gene>